<evidence type="ECO:0000269" key="1">
    <source>
    </source>
</evidence>
<feature type="chain" id="PRO_0000223035" description="Uncharacterized protein C-80">
    <location>
        <begin position="1"/>
        <end position="80"/>
    </location>
</feature>
<sequence length="80" mass="9312">MKARVEYIKLPRCYTKTYRKIEAKKNNDGTIELTLEETMQVISFKLPPALNAKLEQIAIKEKKSKSEIIRIALARYVENV</sequence>
<reference key="1">
    <citation type="journal article" date="1991" name="Virology">
        <title>Complete nucleotide sequence of the virus SSV1 of the archaebacterium Sulfolobus shibatae.</title>
        <authorList>
            <person name="Palm P."/>
            <person name="Schleper C."/>
            <person name="Grampp B."/>
            <person name="Yeats S."/>
            <person name="McWilliam P."/>
            <person name="Reiter W.-D."/>
            <person name="Zillig W."/>
        </authorList>
    </citation>
    <scope>NUCLEOTIDE SEQUENCE [GENOMIC DNA]</scope>
</reference>
<reference key="2">
    <citation type="journal article" date="1999" name="Genetics">
        <title>Genetic requirements for the function of the archaeal virus SSV1 in Sulfolobus solfataricus: construction and testing of viral shuttle vectors.</title>
        <authorList>
            <person name="Stedman K.M."/>
            <person name="Schleper C."/>
            <person name="Rumpf E."/>
            <person name="Zillig W."/>
        </authorList>
    </citation>
    <scope>FUNCTION</scope>
</reference>
<gene>
    <name type="ORF">c80</name>
</gene>
<name>C80_SSV1</name>
<proteinExistence type="predicted"/>
<organism>
    <name type="scientific">Sulfolobus spindle-shape virus 1</name>
    <name type="common">SSV1</name>
    <dbReference type="NCBI Taxonomy" id="244589"/>
    <lineage>
        <taxon>Viruses</taxon>
        <taxon>Viruses incertae sedis</taxon>
        <taxon>Fuselloviridae</taxon>
        <taxon>Alphafusellovirus</taxon>
    </lineage>
</organism>
<protein>
    <recommendedName>
        <fullName>Uncharacterized protein C-80</fullName>
    </recommendedName>
</protein>
<comment type="function">
    <text evidence="1">Essential for virus function.</text>
</comment>
<accession>P20211</accession>
<organismHost>
    <name type="scientific">Saccharolobus solfataricus</name>
    <name type="common">Sulfolobus solfataricus</name>
    <dbReference type="NCBI Taxonomy" id="2287"/>
</organismHost>
<dbReference type="EMBL" id="X07234">
    <property type="protein sequence ID" value="CAA30193.1"/>
    <property type="molecule type" value="Genomic_DNA"/>
</dbReference>
<dbReference type="PIR" id="S03225">
    <property type="entry name" value="S03225"/>
</dbReference>
<dbReference type="RefSeq" id="NP_039791.1">
    <property type="nucleotide sequence ID" value="NC_001338.1"/>
</dbReference>
<dbReference type="SMR" id="P20211"/>
<dbReference type="KEGG" id="vg:2559649"/>
<dbReference type="OrthoDB" id="22838at10239"/>
<dbReference type="Proteomes" id="UP000000854">
    <property type="component" value="Genome"/>
</dbReference>
<dbReference type="GO" id="GO:0006355">
    <property type="term" value="P:regulation of DNA-templated transcription"/>
    <property type="evidence" value="ECO:0007669"/>
    <property type="project" value="InterPro"/>
</dbReference>
<dbReference type="Gene3D" id="1.10.1220.10">
    <property type="entry name" value="Met repressor-like"/>
    <property type="match status" value="1"/>
</dbReference>
<dbReference type="InterPro" id="IPR013321">
    <property type="entry name" value="Arc_rbn_hlx_hlx"/>
</dbReference>
<dbReference type="InterPro" id="IPR002145">
    <property type="entry name" value="CopG"/>
</dbReference>
<dbReference type="InterPro" id="IPR010985">
    <property type="entry name" value="Ribbon_hlx_hlx"/>
</dbReference>
<dbReference type="Pfam" id="PF01402">
    <property type="entry name" value="RHH_1"/>
    <property type="match status" value="1"/>
</dbReference>
<dbReference type="SUPFAM" id="SSF47598">
    <property type="entry name" value="Ribbon-helix-helix"/>
    <property type="match status" value="1"/>
</dbReference>
<keyword id="KW-1185">Reference proteome</keyword>